<feature type="chain" id="PRO_0000412247" description="Probable 5-epi-aristolochene synthase 4">
    <location>
        <begin position="1"/>
        <end position="548"/>
    </location>
</feature>
<feature type="short sequence motif" description="DDXXD motif">
    <location>
        <begin position="301"/>
        <end position="305"/>
    </location>
</feature>
<feature type="binding site" evidence="1">
    <location>
        <position position="301"/>
    </location>
    <ligand>
        <name>Mg(2+)</name>
        <dbReference type="ChEBI" id="CHEBI:18420"/>
        <label>1</label>
    </ligand>
</feature>
<feature type="binding site" evidence="1">
    <location>
        <position position="301"/>
    </location>
    <ligand>
        <name>Mg(2+)</name>
        <dbReference type="ChEBI" id="CHEBI:18420"/>
        <label>2</label>
    </ligand>
</feature>
<feature type="binding site" evidence="1">
    <location>
        <position position="305"/>
    </location>
    <ligand>
        <name>Mg(2+)</name>
        <dbReference type="ChEBI" id="CHEBI:18420"/>
        <label>1</label>
    </ligand>
</feature>
<feature type="binding site" evidence="1">
    <location>
        <position position="305"/>
    </location>
    <ligand>
        <name>Mg(2+)</name>
        <dbReference type="ChEBI" id="CHEBI:18420"/>
        <label>2</label>
    </ligand>
</feature>
<feature type="binding site" evidence="1">
    <location>
        <position position="444"/>
    </location>
    <ligand>
        <name>Mg(2+)</name>
        <dbReference type="ChEBI" id="CHEBI:18420"/>
        <label>3</label>
    </ligand>
</feature>
<feature type="binding site" evidence="1">
    <location>
        <position position="448"/>
    </location>
    <ligand>
        <name>Mg(2+)</name>
        <dbReference type="ChEBI" id="CHEBI:18420"/>
        <label>3</label>
    </ligand>
</feature>
<feature type="binding site" evidence="1">
    <location>
        <position position="452"/>
    </location>
    <ligand>
        <name>Mg(2+)</name>
        <dbReference type="ChEBI" id="CHEBI:18420"/>
        <label>3</label>
    </ligand>
</feature>
<proteinExistence type="evidence at transcript level"/>
<protein>
    <recommendedName>
        <fullName>Probable 5-epi-aristolochene synthase 4</fullName>
        <ecNumber>4.2.3.61</ecNumber>
    </recommendedName>
</protein>
<organism>
    <name type="scientific">Nicotiana attenuata</name>
    <name type="common">Coyote tobacco</name>
    <dbReference type="NCBI Taxonomy" id="49451"/>
    <lineage>
        <taxon>Eukaryota</taxon>
        <taxon>Viridiplantae</taxon>
        <taxon>Streptophyta</taxon>
        <taxon>Embryophyta</taxon>
        <taxon>Tracheophyta</taxon>
        <taxon>Spermatophyta</taxon>
        <taxon>Magnoliopsida</taxon>
        <taxon>eudicotyledons</taxon>
        <taxon>Gunneridae</taxon>
        <taxon>Pentapetalae</taxon>
        <taxon>asterids</taxon>
        <taxon>lamiids</taxon>
        <taxon>Solanales</taxon>
        <taxon>Solanaceae</taxon>
        <taxon>Nicotianoideae</taxon>
        <taxon>Nicotianeae</taxon>
        <taxon>Nicotiana</taxon>
    </lineage>
</organism>
<comment type="function">
    <text evidence="1">Catalyzes the cyclization of trans,trans-farnesyl diphosphate (FPP) to the bicyclic intermediate 5-epi-aristolochene, initial step in the conversion of FPP to the sesquiterpenoid antifungal phytoalexin capsidiol. Produces germacrene A as an enzyme-bound intermediate that is not released by the enzyme, but is further cyclized to produce the bicyclic 5-epi-aristolochene (By similarity).</text>
</comment>
<comment type="catalytic activity">
    <reaction>
        <text>(2E,6E)-farnesyl diphosphate = (+)-5-epi-aristolochene + diphosphate</text>
        <dbReference type="Rhea" id="RHEA:28635"/>
        <dbReference type="ChEBI" id="CHEBI:23925"/>
        <dbReference type="ChEBI" id="CHEBI:33019"/>
        <dbReference type="ChEBI" id="CHEBI:175763"/>
        <dbReference type="EC" id="4.2.3.61"/>
    </reaction>
</comment>
<comment type="cofactor">
    <cofactor evidence="1">
        <name>Mg(2+)</name>
        <dbReference type="ChEBI" id="CHEBI:18420"/>
    </cofactor>
    <text evidence="1">Binds 3 Mg(2+) ions per subunit.</text>
</comment>
<comment type="pathway">
    <text>Secondary metabolite biosynthesis; terpenoid biosynthesis.</text>
</comment>
<comment type="subunit">
    <text evidence="1">Monomer.</text>
</comment>
<comment type="subcellular location">
    <subcellularLocation>
        <location evidence="2">Cytoplasm</location>
    </subcellularLocation>
</comment>
<comment type="domain">
    <text evidence="1">The Asp-Asp-Xaa-Xaa-Asp/Glu (DDXXD/E) motif is important for the catalytic activity, presumably through binding to Mg(2+).</text>
</comment>
<comment type="similarity">
    <text evidence="2">Belongs to the terpene synthase family.</text>
</comment>
<evidence type="ECO:0000250" key="1"/>
<evidence type="ECO:0000305" key="2"/>
<keyword id="KW-0963">Cytoplasm</keyword>
<keyword id="KW-0456">Lyase</keyword>
<keyword id="KW-0460">Magnesium</keyword>
<keyword id="KW-0479">Metal-binding</keyword>
<keyword id="KW-0611">Plant defense</keyword>
<dbReference type="EC" id="4.2.3.61"/>
<dbReference type="EMBL" id="AF542544">
    <property type="protein sequence ID" value="AAO85555.1"/>
    <property type="molecule type" value="mRNA"/>
</dbReference>
<dbReference type="SMR" id="Q84LG0"/>
<dbReference type="UniPathway" id="UPA00213"/>
<dbReference type="GO" id="GO:0005737">
    <property type="term" value="C:cytoplasm"/>
    <property type="evidence" value="ECO:0007669"/>
    <property type="project" value="UniProtKB-SubCell"/>
</dbReference>
<dbReference type="GO" id="GO:0102698">
    <property type="term" value="F:5-epi-aristolochene synthase activity"/>
    <property type="evidence" value="ECO:0007669"/>
    <property type="project" value="UniProtKB-EC"/>
</dbReference>
<dbReference type="GO" id="GO:0000287">
    <property type="term" value="F:magnesium ion binding"/>
    <property type="evidence" value="ECO:0007669"/>
    <property type="project" value="InterPro"/>
</dbReference>
<dbReference type="GO" id="GO:0010333">
    <property type="term" value="F:terpene synthase activity"/>
    <property type="evidence" value="ECO:0007669"/>
    <property type="project" value="InterPro"/>
</dbReference>
<dbReference type="GO" id="GO:0006952">
    <property type="term" value="P:defense response"/>
    <property type="evidence" value="ECO:0007669"/>
    <property type="project" value="UniProtKB-KW"/>
</dbReference>
<dbReference type="GO" id="GO:0016102">
    <property type="term" value="P:diterpenoid biosynthetic process"/>
    <property type="evidence" value="ECO:0007669"/>
    <property type="project" value="InterPro"/>
</dbReference>
<dbReference type="CDD" id="cd00684">
    <property type="entry name" value="Terpene_cyclase_plant_C1"/>
    <property type="match status" value="1"/>
</dbReference>
<dbReference type="FunFam" id="1.10.600.10:FF:000007">
    <property type="entry name" value="Isoprene synthase, chloroplastic"/>
    <property type="match status" value="1"/>
</dbReference>
<dbReference type="FunFam" id="1.50.10.130:FF:000001">
    <property type="entry name" value="Isoprene synthase, chloroplastic"/>
    <property type="match status" value="1"/>
</dbReference>
<dbReference type="Gene3D" id="1.10.600.10">
    <property type="entry name" value="Farnesyl Diphosphate Synthase"/>
    <property type="match status" value="1"/>
</dbReference>
<dbReference type="Gene3D" id="1.50.10.130">
    <property type="entry name" value="Terpene synthase, N-terminal domain"/>
    <property type="match status" value="1"/>
</dbReference>
<dbReference type="InterPro" id="IPR008949">
    <property type="entry name" value="Isoprenoid_synthase_dom_sf"/>
</dbReference>
<dbReference type="InterPro" id="IPR044814">
    <property type="entry name" value="Terpene_cyclase_plant_C1"/>
</dbReference>
<dbReference type="InterPro" id="IPR001906">
    <property type="entry name" value="Terpene_synth_N"/>
</dbReference>
<dbReference type="InterPro" id="IPR036965">
    <property type="entry name" value="Terpene_synth_N_sf"/>
</dbReference>
<dbReference type="InterPro" id="IPR050148">
    <property type="entry name" value="Terpene_synthase-like"/>
</dbReference>
<dbReference type="InterPro" id="IPR005630">
    <property type="entry name" value="Terpene_synthase_metal-bd"/>
</dbReference>
<dbReference type="InterPro" id="IPR008930">
    <property type="entry name" value="Terpenoid_cyclase/PrenylTrfase"/>
</dbReference>
<dbReference type="PANTHER" id="PTHR31225:SF93">
    <property type="entry name" value="ALPHA-HUMULENE_(-)-(E)-BETA-CARYOPHYLLENE SYNTHASE"/>
    <property type="match status" value="1"/>
</dbReference>
<dbReference type="PANTHER" id="PTHR31225">
    <property type="entry name" value="OS04G0344100 PROTEIN-RELATED"/>
    <property type="match status" value="1"/>
</dbReference>
<dbReference type="Pfam" id="PF01397">
    <property type="entry name" value="Terpene_synth"/>
    <property type="match status" value="1"/>
</dbReference>
<dbReference type="Pfam" id="PF03936">
    <property type="entry name" value="Terpene_synth_C"/>
    <property type="match status" value="1"/>
</dbReference>
<dbReference type="SFLD" id="SFLDS00005">
    <property type="entry name" value="Isoprenoid_Synthase_Type_I"/>
    <property type="match status" value="1"/>
</dbReference>
<dbReference type="SFLD" id="SFLDG01604">
    <property type="entry name" value="Terpene_Cyclase_Like_1_C_Termi"/>
    <property type="match status" value="1"/>
</dbReference>
<dbReference type="SFLD" id="SFLDG01014">
    <property type="entry name" value="Terpene_Cyclase_Like_1_N-term"/>
    <property type="match status" value="1"/>
</dbReference>
<dbReference type="SUPFAM" id="SSF48239">
    <property type="entry name" value="Terpenoid cyclases/Protein prenyltransferases"/>
    <property type="match status" value="1"/>
</dbReference>
<dbReference type="SUPFAM" id="SSF48576">
    <property type="entry name" value="Terpenoid synthases"/>
    <property type="match status" value="1"/>
</dbReference>
<sequence>MASAAVGNYEEEIVRPVADFSPSLWGDHFLSFSIDNHVAQKYAQEIEPLKEQTRSMLVATGRKLVDTLNLIDTIERLGISYHFEKEIDEILDQIYNQNSNSSDLFTSALLFRLLRQHGFNISPEIFSKFQDENGKFKESLASDVVGLLNLYEASHVRTHADDILEAALAFSTIHLESAAPHLKSPLREQVAHALEQCLHKGVPRVETRFFISSIYEKEQSKNNVLLRFAILDFNLLQMLHKQELAEVSRWWKDLDFVTTLPYARDRVVECYFWALGVYFEPQYSQARVMLVKTISMISIVDDTFDAYGTVKELETYTDAIQRWDINEIDRLPDYMKISYKAILDLYKDYEKELSSAGRSHIVCHAIERMKEVVRNYNVESTWFIEGYMPPVSEYLSNALATTTYYYLATTSYLGMKSATEQDFEWLSKNPKILEASVIICRVIDDTATYEVEKSRGQIATGIECCMRDYGVSTKEAMDKFQQMAETAWKDLNEGLLRPTPVSAELLTPILNLARIVEVTYIHNLDGYTHPEKVLKPHIIGLLVDSIDI</sequence>
<reference key="1">
    <citation type="submission" date="2002-09" db="EMBL/GenBank/DDBJ databases">
        <title>Microarray analysis of insect-induced changes in transcript accumulation.</title>
        <authorList>
            <person name="Hui D."/>
            <person name="Li H."/>
        </authorList>
    </citation>
    <scope>NUCLEOTIDE SEQUENCE [MRNA]</scope>
</reference>
<name>5EAS4_NICAT</name>
<accession>Q84LG0</accession>